<accession>A3LWH3</accession>
<dbReference type="EC" id="3.6.4.13"/>
<dbReference type="EMBL" id="CP000499">
    <property type="protein sequence ID" value="ABN67277.2"/>
    <property type="molecule type" value="Genomic_DNA"/>
</dbReference>
<dbReference type="RefSeq" id="XP_001385306.2">
    <property type="nucleotide sequence ID" value="XM_001385269.1"/>
</dbReference>
<dbReference type="SMR" id="A3LWH3"/>
<dbReference type="FunCoup" id="A3LWH3">
    <property type="interactions" value="803"/>
</dbReference>
<dbReference type="STRING" id="322104.A3LWH3"/>
<dbReference type="GeneID" id="4839286"/>
<dbReference type="KEGG" id="pic:PICST_60418"/>
<dbReference type="eggNOG" id="KOG0348">
    <property type="taxonomic scope" value="Eukaryota"/>
</dbReference>
<dbReference type="HOGENOM" id="CLU_003041_26_2_1"/>
<dbReference type="InParanoid" id="A3LWH3"/>
<dbReference type="OMA" id="AVHIKAD"/>
<dbReference type="OrthoDB" id="422663at2759"/>
<dbReference type="Proteomes" id="UP000002258">
    <property type="component" value="Chromosome 5"/>
</dbReference>
<dbReference type="GO" id="GO:0005730">
    <property type="term" value="C:nucleolus"/>
    <property type="evidence" value="ECO:0007669"/>
    <property type="project" value="UniProtKB-SubCell"/>
</dbReference>
<dbReference type="GO" id="GO:0005524">
    <property type="term" value="F:ATP binding"/>
    <property type="evidence" value="ECO:0007669"/>
    <property type="project" value="UniProtKB-KW"/>
</dbReference>
<dbReference type="GO" id="GO:0016887">
    <property type="term" value="F:ATP hydrolysis activity"/>
    <property type="evidence" value="ECO:0007669"/>
    <property type="project" value="RHEA"/>
</dbReference>
<dbReference type="GO" id="GO:0003723">
    <property type="term" value="F:RNA binding"/>
    <property type="evidence" value="ECO:0007669"/>
    <property type="project" value="UniProtKB-KW"/>
</dbReference>
<dbReference type="GO" id="GO:0003724">
    <property type="term" value="F:RNA helicase activity"/>
    <property type="evidence" value="ECO:0007669"/>
    <property type="project" value="UniProtKB-EC"/>
</dbReference>
<dbReference type="GO" id="GO:0000464">
    <property type="term" value="P:endonucleolytic cleavage in ITS1 upstream of 5.8S rRNA from tricistronic rRNA transcript (SSU-rRNA, 5.8S rRNA, LSU-rRNA)"/>
    <property type="evidence" value="ECO:0007669"/>
    <property type="project" value="EnsemblFungi"/>
</dbReference>
<dbReference type="CDD" id="cd17949">
    <property type="entry name" value="DEADc_DDX31"/>
    <property type="match status" value="1"/>
</dbReference>
<dbReference type="CDD" id="cd18787">
    <property type="entry name" value="SF2_C_DEAD"/>
    <property type="match status" value="1"/>
</dbReference>
<dbReference type="Gene3D" id="3.40.50.300">
    <property type="entry name" value="P-loop containing nucleotide triphosphate hydrolases"/>
    <property type="match status" value="2"/>
</dbReference>
<dbReference type="InterPro" id="IPR011545">
    <property type="entry name" value="DEAD/DEAH_box_helicase_dom"/>
</dbReference>
<dbReference type="InterPro" id="IPR014001">
    <property type="entry name" value="Helicase_ATP-bd"/>
</dbReference>
<dbReference type="InterPro" id="IPR001650">
    <property type="entry name" value="Helicase_C-like"/>
</dbReference>
<dbReference type="InterPro" id="IPR027417">
    <property type="entry name" value="P-loop_NTPase"/>
</dbReference>
<dbReference type="InterPro" id="IPR014014">
    <property type="entry name" value="RNA_helicase_DEAD_Q_motif"/>
</dbReference>
<dbReference type="InterPro" id="IPR025313">
    <property type="entry name" value="SPB4-like_CTE"/>
</dbReference>
<dbReference type="PANTHER" id="PTHR24031">
    <property type="entry name" value="RNA HELICASE"/>
    <property type="match status" value="1"/>
</dbReference>
<dbReference type="Pfam" id="PF13959">
    <property type="entry name" value="CTE_SPB4"/>
    <property type="match status" value="1"/>
</dbReference>
<dbReference type="Pfam" id="PF00270">
    <property type="entry name" value="DEAD"/>
    <property type="match status" value="1"/>
</dbReference>
<dbReference type="Pfam" id="PF00271">
    <property type="entry name" value="Helicase_C"/>
    <property type="match status" value="1"/>
</dbReference>
<dbReference type="SMART" id="SM00487">
    <property type="entry name" value="DEXDc"/>
    <property type="match status" value="1"/>
</dbReference>
<dbReference type="SMART" id="SM01178">
    <property type="entry name" value="DUF4217"/>
    <property type="match status" value="1"/>
</dbReference>
<dbReference type="SMART" id="SM00490">
    <property type="entry name" value="HELICc"/>
    <property type="match status" value="1"/>
</dbReference>
<dbReference type="SUPFAM" id="SSF52540">
    <property type="entry name" value="P-loop containing nucleoside triphosphate hydrolases"/>
    <property type="match status" value="2"/>
</dbReference>
<dbReference type="PROSITE" id="PS51192">
    <property type="entry name" value="HELICASE_ATP_BIND_1"/>
    <property type="match status" value="1"/>
</dbReference>
<dbReference type="PROSITE" id="PS51194">
    <property type="entry name" value="HELICASE_CTER"/>
    <property type="match status" value="1"/>
</dbReference>
<dbReference type="PROSITE" id="PS51195">
    <property type="entry name" value="Q_MOTIF"/>
    <property type="match status" value="1"/>
</dbReference>
<sequence length="733" mass="81740">MDEDDGLLLNFAVPDVSVSSGSNKRTTSKVTGGKWKDRRKLQLSLQGRGRNQKKDRSATGKDDGKKHENDESNDSKKRPTIEPIHGPTSKMIKFSESKGEFGGKNNSYVSSLFTSNQSSSQLKVTKESDEKTYLPSNAPVEDASTFEGLGINERLSKHLTETLRFKNPTKVQKSVIPTMLSTERDLFIKAQTGSGKTLSFLLPIFHKLMMENKHKINRDSGLFAVILTPTRELATQIYGVLETLTRCYHHIVPGIVIGGEKKKSEKARIRKGVNILVGTPGRLADHMENTESLDISQLRWLILDEGDKLVELGFEETITKITNLITRNSQIMESMHKWQGLPVRRINLLCSATMQNNVEKLGSIILNNPEMISDGSSSGKHSEEVTAPDQLIQNVVVVPPKLRLVTLSAILKKISSDMSGTNNSTRTIVFFSCSDSVNFHFDVFTRGGNTFKKVKNDESGKLETVEVENDTPLIGQGTAVYKLHGSLSQQTRTSTLQAFIKDSKSNHSILFCTDVASRGLDLPNIASVIEYDPPFTIDDHLHRIGRSARVGKEGTATLFLLPGNEEGYVDGKLQVVHPKEGNLRIVNYENYLKDGFSAKSNNEDTKKKSKDPKSREGKWDIHATTWHLDIERWLLEDSGAHDKAVQAFTSHIRAYATHLSSERNYFNVKLLHLGHLAKSFGLRETPKKLGKSVESNSGIQGASKKTKKEDPRKKMLRMAKMALKSNSDEFNYS</sequence>
<name>DBP7_PICST</name>
<organism>
    <name type="scientific">Scheffersomyces stipitis (strain ATCC 58785 / CBS 6054 / NBRC 10063 / NRRL Y-11545)</name>
    <name type="common">Yeast</name>
    <name type="synonym">Pichia stipitis</name>
    <dbReference type="NCBI Taxonomy" id="322104"/>
    <lineage>
        <taxon>Eukaryota</taxon>
        <taxon>Fungi</taxon>
        <taxon>Dikarya</taxon>
        <taxon>Ascomycota</taxon>
        <taxon>Saccharomycotina</taxon>
        <taxon>Pichiomycetes</taxon>
        <taxon>Debaryomycetaceae</taxon>
        <taxon>Scheffersomyces</taxon>
    </lineage>
</organism>
<protein>
    <recommendedName>
        <fullName>ATP-dependent RNA helicase DBP7</fullName>
        <ecNumber>3.6.4.13</ecNumber>
    </recommendedName>
</protein>
<reference key="1">
    <citation type="journal article" date="2007" name="Nat. Biotechnol.">
        <title>Genome sequence of the lignocellulose-bioconverting and xylose-fermenting yeast Pichia stipitis.</title>
        <authorList>
            <person name="Jeffries T.W."/>
            <person name="Grigoriev I.V."/>
            <person name="Grimwood J."/>
            <person name="Laplaza J.M."/>
            <person name="Aerts A."/>
            <person name="Salamov A."/>
            <person name="Schmutz J."/>
            <person name="Lindquist E."/>
            <person name="Dehal P."/>
            <person name="Shapiro H."/>
            <person name="Jin Y.-S."/>
            <person name="Passoth V."/>
            <person name="Richardson P.M."/>
        </authorList>
    </citation>
    <scope>NUCLEOTIDE SEQUENCE [LARGE SCALE GENOMIC DNA]</scope>
    <source>
        <strain>ATCC 58785 / CBS 6054 / NBRC 10063 / NRRL Y-11545</strain>
    </source>
</reference>
<proteinExistence type="inferred from homology"/>
<keyword id="KW-0067">ATP-binding</keyword>
<keyword id="KW-0347">Helicase</keyword>
<keyword id="KW-0378">Hydrolase</keyword>
<keyword id="KW-0547">Nucleotide-binding</keyword>
<keyword id="KW-0539">Nucleus</keyword>
<keyword id="KW-1185">Reference proteome</keyword>
<keyword id="KW-0690">Ribosome biogenesis</keyword>
<keyword id="KW-0694">RNA-binding</keyword>
<keyword id="KW-0698">rRNA processing</keyword>
<comment type="function">
    <text evidence="1">ATP-binding RNA helicase involved in the biogenesis of 60S ribosomal subunits and is required for the normal formation of 25S and 5.8S rRNAs.</text>
</comment>
<comment type="catalytic activity">
    <reaction>
        <text>ATP + H2O = ADP + phosphate + H(+)</text>
        <dbReference type="Rhea" id="RHEA:13065"/>
        <dbReference type="ChEBI" id="CHEBI:15377"/>
        <dbReference type="ChEBI" id="CHEBI:15378"/>
        <dbReference type="ChEBI" id="CHEBI:30616"/>
        <dbReference type="ChEBI" id="CHEBI:43474"/>
        <dbReference type="ChEBI" id="CHEBI:456216"/>
        <dbReference type="EC" id="3.6.4.13"/>
    </reaction>
</comment>
<comment type="subcellular location">
    <subcellularLocation>
        <location evidence="1">Nucleus</location>
        <location evidence="1">Nucleolus</location>
    </subcellularLocation>
</comment>
<comment type="domain">
    <text>The Q motif is unique to and characteristic of the DEAD box family of RNA helicases and controls ATP binding and hydrolysis.</text>
</comment>
<comment type="miscellaneous">
    <text>Present with 1460 molecules/cell in log phase SD medium.</text>
</comment>
<comment type="similarity">
    <text evidence="5">Belongs to the DEAD box helicase family. DDX31/DBP7 subfamily.</text>
</comment>
<evidence type="ECO:0000250" key="1"/>
<evidence type="ECO:0000255" key="2">
    <source>
        <dbReference type="PROSITE-ProRule" id="PRU00541"/>
    </source>
</evidence>
<evidence type="ECO:0000255" key="3">
    <source>
        <dbReference type="PROSITE-ProRule" id="PRU00542"/>
    </source>
</evidence>
<evidence type="ECO:0000256" key="4">
    <source>
        <dbReference type="SAM" id="MobiDB-lite"/>
    </source>
</evidence>
<evidence type="ECO:0000305" key="5"/>
<gene>
    <name type="primary">DPB7</name>
    <name type="ORF">PICST_60418</name>
</gene>
<feature type="chain" id="PRO_0000285147" description="ATP-dependent RNA helicase DBP7">
    <location>
        <begin position="1"/>
        <end position="733"/>
    </location>
</feature>
<feature type="domain" description="Helicase ATP-binding" evidence="2">
    <location>
        <begin position="177"/>
        <end position="372"/>
    </location>
</feature>
<feature type="domain" description="Helicase C-terminal" evidence="3">
    <location>
        <begin position="406"/>
        <end position="596"/>
    </location>
</feature>
<feature type="region of interest" description="Disordered" evidence="4">
    <location>
        <begin position="1"/>
        <end position="92"/>
    </location>
</feature>
<feature type="region of interest" description="Disordered" evidence="4">
    <location>
        <begin position="119"/>
        <end position="139"/>
    </location>
</feature>
<feature type="region of interest" description="Disordered" evidence="4">
    <location>
        <begin position="687"/>
        <end position="714"/>
    </location>
</feature>
<feature type="short sequence motif" description="Q motif">
    <location>
        <begin position="144"/>
        <end position="173"/>
    </location>
</feature>
<feature type="short sequence motif" description="DEAD box">
    <location>
        <begin position="304"/>
        <end position="307"/>
    </location>
</feature>
<feature type="compositionally biased region" description="Polar residues" evidence="4">
    <location>
        <begin position="17"/>
        <end position="30"/>
    </location>
</feature>
<feature type="compositionally biased region" description="Basic and acidic residues" evidence="4">
    <location>
        <begin position="52"/>
        <end position="80"/>
    </location>
</feature>
<feature type="binding site" evidence="2">
    <location>
        <begin position="190"/>
        <end position="197"/>
    </location>
    <ligand>
        <name>ATP</name>
        <dbReference type="ChEBI" id="CHEBI:30616"/>
    </ligand>
</feature>